<dbReference type="EMBL" id="AE006914">
    <property type="protein sequence ID" value="AAL02598.1"/>
    <property type="molecule type" value="Genomic_DNA"/>
</dbReference>
<dbReference type="PIR" id="D97707">
    <property type="entry name" value="D97707"/>
</dbReference>
<dbReference type="RefSeq" id="WP_010976746.1">
    <property type="nucleotide sequence ID" value="NC_003103.1"/>
</dbReference>
<dbReference type="SMR" id="Q92JK7"/>
<dbReference type="GeneID" id="928605"/>
<dbReference type="KEGG" id="rco:RC0060"/>
<dbReference type="PATRIC" id="fig|272944.4.peg.71"/>
<dbReference type="HOGENOM" id="CLU_1625807_0_0_5"/>
<dbReference type="Proteomes" id="UP000000816">
    <property type="component" value="Chromosome"/>
</dbReference>
<dbReference type="InterPro" id="IPR035354">
    <property type="entry name" value="DUF5424"/>
</dbReference>
<dbReference type="Pfam" id="PF17462">
    <property type="entry name" value="DUF5424"/>
    <property type="match status" value="1"/>
</dbReference>
<sequence>MSNSNYENIYKAFYCFSEATNSAYSAINTFLELPNVFNKYPAVISLIFSKTATLDSNINNIIKNGVIIYDISTALIGAINTFYKDKKLVNKILKDGQNAIDKLIETTTYLSPIVTDITNSYLVDPYKEENALLFDLQIPNSTSSDYYKLSGTESITLAEIEYY</sequence>
<name>Y060_RICCN</name>
<feature type="chain" id="PRO_0000101447" description="Uncharacterized protein RC0060">
    <location>
        <begin position="1"/>
        <end position="163"/>
    </location>
</feature>
<organism>
    <name type="scientific">Rickettsia conorii (strain ATCC VR-613 / Malish 7)</name>
    <dbReference type="NCBI Taxonomy" id="272944"/>
    <lineage>
        <taxon>Bacteria</taxon>
        <taxon>Pseudomonadati</taxon>
        <taxon>Pseudomonadota</taxon>
        <taxon>Alphaproteobacteria</taxon>
        <taxon>Rickettsiales</taxon>
        <taxon>Rickettsiaceae</taxon>
        <taxon>Rickettsieae</taxon>
        <taxon>Rickettsia</taxon>
        <taxon>spotted fever group</taxon>
    </lineage>
</organism>
<reference key="1">
    <citation type="journal article" date="2001" name="Science">
        <title>Mechanisms of evolution in Rickettsia conorii and R. prowazekii.</title>
        <authorList>
            <person name="Ogata H."/>
            <person name="Audic S."/>
            <person name="Renesto-Audiffren P."/>
            <person name="Fournier P.-E."/>
            <person name="Barbe V."/>
            <person name="Samson D."/>
            <person name="Roux V."/>
            <person name="Cossart P."/>
            <person name="Weissenbach J."/>
            <person name="Claverie J.-M."/>
            <person name="Raoult D."/>
        </authorList>
    </citation>
    <scope>NUCLEOTIDE SEQUENCE [LARGE SCALE GENOMIC DNA]</scope>
    <source>
        <strain>ATCC VR-613 / Malish 7</strain>
    </source>
</reference>
<gene>
    <name type="ordered locus">RC0060</name>
</gene>
<proteinExistence type="predicted"/>
<accession>Q92JK7</accession>
<protein>
    <recommendedName>
        <fullName>Uncharacterized protein RC0060</fullName>
    </recommendedName>
</protein>